<dbReference type="EMBL" id="AY826093">
    <property type="protein sequence ID" value="AAV90665.1"/>
    <property type="molecule type" value="mRNA"/>
</dbReference>
<dbReference type="SMR" id="Q5MIW7"/>
<dbReference type="VEuPathDB" id="VectorBase:AALC636_016457"/>
<dbReference type="VEuPathDB" id="VectorBase:AALF024478"/>
<dbReference type="VEuPathDB" id="VectorBase:AALFPA_066967"/>
<dbReference type="Proteomes" id="UP000069940">
    <property type="component" value="Unplaced"/>
</dbReference>
<dbReference type="GO" id="GO:0005615">
    <property type="term" value="C:extracellular space"/>
    <property type="evidence" value="ECO:0007669"/>
    <property type="project" value="TreeGrafter"/>
</dbReference>
<dbReference type="GO" id="GO:0005549">
    <property type="term" value="F:odorant binding"/>
    <property type="evidence" value="ECO:0007669"/>
    <property type="project" value="InterPro"/>
</dbReference>
<dbReference type="GO" id="GO:0090729">
    <property type="term" value="F:toxin activity"/>
    <property type="evidence" value="ECO:0007669"/>
    <property type="project" value="UniProtKB-KW"/>
</dbReference>
<dbReference type="GO" id="GO:0007608">
    <property type="term" value="P:sensory perception of smell"/>
    <property type="evidence" value="ECO:0007669"/>
    <property type="project" value="TreeGrafter"/>
</dbReference>
<dbReference type="CDD" id="cd23992">
    <property type="entry name" value="PBP_GOBP"/>
    <property type="match status" value="1"/>
</dbReference>
<dbReference type="Gene3D" id="1.10.238.20">
    <property type="entry name" value="Pheromone/general odorant binding protein domain"/>
    <property type="match status" value="2"/>
</dbReference>
<dbReference type="InterPro" id="IPR006170">
    <property type="entry name" value="PBP/GOBP"/>
</dbReference>
<dbReference type="InterPro" id="IPR036728">
    <property type="entry name" value="PBP_GOBP_sf"/>
</dbReference>
<dbReference type="PANTHER" id="PTHR11857:SF43">
    <property type="entry name" value="GEO07291P1-RELATED"/>
    <property type="match status" value="1"/>
</dbReference>
<dbReference type="PANTHER" id="PTHR11857">
    <property type="entry name" value="ODORANT BINDING PROTEIN-RELATED"/>
    <property type="match status" value="1"/>
</dbReference>
<dbReference type="Pfam" id="PF01395">
    <property type="entry name" value="PBP_GOBP"/>
    <property type="match status" value="2"/>
</dbReference>
<dbReference type="SMART" id="SM00708">
    <property type="entry name" value="PhBP"/>
    <property type="match status" value="2"/>
</dbReference>
<dbReference type="SUPFAM" id="SSF47565">
    <property type="entry name" value="Insect pheromone/odorant-binding proteins"/>
    <property type="match status" value="2"/>
</dbReference>
<protein>
    <recommendedName>
        <fullName evidence="5">Long form salivary protein D7L1</fullName>
        <shortName evidence="5">AlboD7L1</shortName>
    </recommendedName>
    <alternativeName>
        <fullName evidence="7">Long form D7Bclu1 salivary protein d7l1</fullName>
    </alternativeName>
</protein>
<organism evidence="7">
    <name type="scientific">Aedes albopictus</name>
    <name type="common">Asian tiger mosquito</name>
    <name type="synonym">Stegomyia albopicta</name>
    <dbReference type="NCBI Taxonomy" id="7160"/>
    <lineage>
        <taxon>Eukaryota</taxon>
        <taxon>Metazoa</taxon>
        <taxon>Ecdysozoa</taxon>
        <taxon>Arthropoda</taxon>
        <taxon>Hexapoda</taxon>
        <taxon>Insecta</taxon>
        <taxon>Pterygota</taxon>
        <taxon>Neoptera</taxon>
        <taxon>Endopterygota</taxon>
        <taxon>Diptera</taxon>
        <taxon>Nematocera</taxon>
        <taxon>Culicoidea</taxon>
        <taxon>Culicidae</taxon>
        <taxon>Culicinae</taxon>
        <taxon>Aedini</taxon>
        <taxon>Aedes</taxon>
        <taxon>Stegomyia</taxon>
    </lineage>
</organism>
<sequence length="332" mass="38429">MHSPKSFLLLAVVFVALRVTAAPLWNAKNPEQLQYIAARCMEEWSPKAKDPKAALKNWMEWKLQPSNEEATQCYTKCMLENIGYYEPGEKRLKGVRVMQQWETFNRYQSADRNKVHDLTDTFDFIKPLKSSSCSDVFNAYKDVHAKHLETIKAILFCDGKSAEKYYKDKGKNVKQKGESIFVHCEEIHYPVGSPQRNELCKVRKYELGTGKPFENLMECIFKGVRYFNDKNELNIDEIARDFTQVGKKPDAVKAAMENCKSKTKETDPGKKAVEYYKCLLADSKVKKDFMEAFDYREIRSKDYYAQITGKLKPYSASDVRKEVNDIDSNKCV</sequence>
<accession>Q5MIW7</accession>
<reference evidence="7" key="1">
    <citation type="journal article" date="2007" name="Insect Biochem. Mol. Biol.">
        <title>An insight into the sialome of the adult female mosquito Aedes albopictus.</title>
        <authorList>
            <person name="Arca B."/>
            <person name="Lombardo F."/>
            <person name="Francischetti I.M."/>
            <person name="Pham V.M."/>
            <person name="Mestres-Simon M."/>
            <person name="Andersen J.F."/>
            <person name="Ribeiro J.M."/>
        </authorList>
    </citation>
    <scope>NUCLEOTIDE SEQUENCE [MRNA]</scope>
    <scope>PROTEIN SEQUENCE OF 22-39</scope>
    <scope>TISSUE SPECIFICITY</scope>
    <source>
        <tissue evidence="7">Salivary gland</tissue>
    </source>
</reference>
<reference key="2">
    <citation type="journal article" date="2013" name="Insect Mol. Biol.">
        <title>First screening of Aedes albopictus immunogenic salivary proteins.</title>
        <authorList>
            <person name="Doucoure S."/>
            <person name="Cornelie S."/>
            <person name="Patramool S."/>
            <person name="Mouchet F."/>
            <person name="Demettre E."/>
            <person name="Seveno M."/>
            <person name="Dehecq J.S."/>
            <person name="Rutee H."/>
            <person name="Herve J.P."/>
            <person name="Favier F."/>
            <person name="Misse D."/>
            <person name="Gasque P."/>
            <person name="Remoue F."/>
        </authorList>
    </citation>
    <scope>IDENTIFICATION BY MASS SPECTROMETRY</scope>
    <scope>TISSUE SPECIFICITY</scope>
</reference>
<reference evidence="6" key="3">
    <citation type="journal article" date="2020" name="Biomolecules">
        <title>Aedes albopictus D7 Salivary Protein Prevents Host Hemostasis and Inflammation.</title>
        <authorList>
            <person name="Martin-Martin I."/>
            <person name="Smith L.B."/>
            <person name="Chagas A.C."/>
            <person name="Sa-Nunes A."/>
            <person name="Shrivastava G."/>
            <person name="Valenzuela-Leon P.C."/>
            <person name="Calvo E."/>
        </authorList>
    </citation>
    <scope>FUNCTION</scope>
    <scope>TISSUE SPECIFICITY</scope>
</reference>
<name>D7L1_AEDAL</name>
<keyword id="KW-0903">Direct protein sequencing</keyword>
<keyword id="KW-1015">Disulfide bond</keyword>
<keyword id="KW-1199">Hemostasis impairing toxin</keyword>
<keyword id="KW-1201">Platelet aggregation inhibiting toxin</keyword>
<keyword id="KW-0964">Secreted</keyword>
<keyword id="KW-0732">Signal</keyword>
<keyword id="KW-0800">Toxin</keyword>
<comment type="function">
    <text evidence="1 4">Modulates blood feeding of female mosquitoes on vertebrate species by binding and sequestering different mediators involved in the host response, such as biogenic amines and eicosanoids (By similarity). Binds dopamine, serotonin, histamine, tryptamine, adrenaline, noradrenaline, leukotriene B4, leukotriene C4, leukotriene D4, leukotriene E4 and U-46619, a stable analog of thromboxane A2 (PubMed:32992542). Inhibits platelet aggregation induced by serotonin and low doses of thromboxane A2 analog U-46619 but not by high doses of U-46619, collagen or ADP (PubMed:32992542). Prevents leukocyte recruitment (PubMed:32992542).</text>
</comment>
<comment type="subcellular location">
    <subcellularLocation>
        <location evidence="1">Secreted</location>
    </subcellularLocation>
</comment>
<comment type="tissue specificity">
    <text evidence="2 3 4">Female mosquito salivary gland (at protein level).</text>
</comment>
<comment type="domain">
    <text evidence="1">Lipids and biogenic amines bind independently through different binding pockets, with lipids binding to the N-terminal pocket and biogenic amines to the C-terminal pocket.</text>
</comment>
<comment type="miscellaneous">
    <text evidence="3">Antibodies against the protein are found in the serum of individuals exposed to Aedes albopictus bites.</text>
</comment>
<comment type="similarity">
    <text evidence="6">Belongs to the PBP/GOBP family.</text>
</comment>
<proteinExistence type="evidence at protein level"/>
<gene>
    <name evidence="6" type="primary">D7L1</name>
</gene>
<feature type="signal peptide" evidence="2">
    <location>
        <begin position="1"/>
        <end position="21"/>
    </location>
</feature>
<feature type="chain" id="PRO_0000459823" description="Long form salivary protein D7L1" evidence="6">
    <location>
        <begin position="22"/>
        <end position="332"/>
    </location>
</feature>
<feature type="binding site" evidence="1">
    <location>
        <position position="61"/>
    </location>
    <ligand>
        <name>leukotriene E4</name>
        <dbReference type="ChEBI" id="CHEBI:57462"/>
    </ligand>
</feature>
<feature type="binding site" evidence="1">
    <location>
        <position position="176"/>
    </location>
    <ligand>
        <name>leukotriene E4</name>
        <dbReference type="ChEBI" id="CHEBI:57462"/>
    </ligand>
</feature>
<feature type="binding site" evidence="1">
    <location>
        <position position="185"/>
    </location>
    <ligand>
        <name>noradrenaline</name>
        <dbReference type="ChEBI" id="CHEBI:166902"/>
    </ligand>
</feature>
<feature type="binding site" evidence="1">
    <location>
        <position position="203"/>
    </location>
    <ligand>
        <name>noradrenaline</name>
        <dbReference type="ChEBI" id="CHEBI:166902"/>
    </ligand>
</feature>
<feature type="binding site" evidence="1">
    <location>
        <position position="294"/>
    </location>
    <ligand>
        <name>noradrenaline</name>
        <dbReference type="ChEBI" id="CHEBI:166902"/>
    </ligand>
</feature>
<feature type="binding site" evidence="1">
    <location>
        <position position="297"/>
    </location>
    <ligand>
        <name>noradrenaline</name>
        <dbReference type="ChEBI" id="CHEBI:166902"/>
    </ligand>
</feature>
<feature type="disulfide bond" evidence="1">
    <location>
        <begin position="40"/>
        <end position="77"/>
    </location>
</feature>
<feature type="disulfide bond" evidence="1">
    <location>
        <begin position="73"/>
        <end position="133"/>
    </location>
</feature>
<feature type="disulfide bond" evidence="1">
    <location>
        <begin position="184"/>
        <end position="219"/>
    </location>
</feature>
<feature type="disulfide bond" evidence="1">
    <location>
        <begin position="200"/>
        <end position="331"/>
    </location>
</feature>
<feature type="disulfide bond" evidence="1">
    <location>
        <begin position="259"/>
        <end position="278"/>
    </location>
</feature>
<evidence type="ECO:0000250" key="1">
    <source>
        <dbReference type="UniProtKB" id="P18153"/>
    </source>
</evidence>
<evidence type="ECO:0000269" key="2">
    <source>
    </source>
</evidence>
<evidence type="ECO:0000269" key="3">
    <source>
    </source>
</evidence>
<evidence type="ECO:0000269" key="4">
    <source>
    </source>
</evidence>
<evidence type="ECO:0000303" key="5">
    <source>
    </source>
</evidence>
<evidence type="ECO:0000305" key="6"/>
<evidence type="ECO:0000312" key="7">
    <source>
        <dbReference type="EMBL" id="AAV90665.1"/>
    </source>
</evidence>